<gene>
    <name type="ordered locus">BRA0576</name>
    <name type="ordered locus">BS1330_II0571</name>
</gene>
<feature type="signal peptide" evidence="1">
    <location>
        <begin position="1"/>
        <end position="29"/>
    </location>
</feature>
<feature type="chain" id="PRO_0000283787" description="Putative binding protein BRA0576/BS1330_II0571">
    <location>
        <begin position="30"/>
        <end position="615"/>
    </location>
</feature>
<evidence type="ECO:0000255" key="1"/>
<evidence type="ECO:0000305" key="2"/>
<comment type="subcellular location">
    <subcellularLocation>
        <location evidence="2">Periplasm</location>
    </subcellularLocation>
</comment>
<comment type="similarity">
    <text evidence="2">Belongs to the bacterial solute-binding protein 5 family.</text>
</comment>
<reference key="1">
    <citation type="journal article" date="2002" name="Proc. Natl. Acad. Sci. U.S.A.">
        <title>The Brucella suis genome reveals fundamental similarities between animal and plant pathogens and symbionts.</title>
        <authorList>
            <person name="Paulsen I.T."/>
            <person name="Seshadri R."/>
            <person name="Nelson K.E."/>
            <person name="Eisen J.A."/>
            <person name="Heidelberg J.F."/>
            <person name="Read T.D."/>
            <person name="Dodson R.J."/>
            <person name="Umayam L.A."/>
            <person name="Brinkac L.M."/>
            <person name="Beanan M.J."/>
            <person name="Daugherty S.C."/>
            <person name="DeBoy R.T."/>
            <person name="Durkin A.S."/>
            <person name="Kolonay J.F."/>
            <person name="Madupu R."/>
            <person name="Nelson W.C."/>
            <person name="Ayodeji B."/>
            <person name="Kraul M."/>
            <person name="Shetty J."/>
            <person name="Malek J.A."/>
            <person name="Van Aken S.E."/>
            <person name="Riedmuller S."/>
            <person name="Tettelin H."/>
            <person name="Gill S.R."/>
            <person name="White O."/>
            <person name="Salzberg S.L."/>
            <person name="Hoover D.L."/>
            <person name="Lindler L.E."/>
            <person name="Halling S.M."/>
            <person name="Boyle S.M."/>
            <person name="Fraser C.M."/>
        </authorList>
    </citation>
    <scope>NUCLEOTIDE SEQUENCE [LARGE SCALE GENOMIC DNA]</scope>
    <source>
        <strain>1330</strain>
    </source>
</reference>
<reference key="2">
    <citation type="journal article" date="2011" name="J. Bacteriol.">
        <title>Revised genome sequence of Brucella suis 1330.</title>
        <authorList>
            <person name="Tae H."/>
            <person name="Shallom S."/>
            <person name="Settlage R."/>
            <person name="Preston D."/>
            <person name="Adams L.G."/>
            <person name="Garner H.R."/>
        </authorList>
    </citation>
    <scope>NUCLEOTIDE SEQUENCE [LARGE SCALE GENOMIC DNA]</scope>
    <source>
        <strain>1330</strain>
    </source>
</reference>
<organism>
    <name type="scientific">Brucella suis biovar 1 (strain 1330)</name>
    <dbReference type="NCBI Taxonomy" id="204722"/>
    <lineage>
        <taxon>Bacteria</taxon>
        <taxon>Pseudomonadati</taxon>
        <taxon>Pseudomonadota</taxon>
        <taxon>Alphaproteobacteria</taxon>
        <taxon>Hyphomicrobiales</taxon>
        <taxon>Brucellaceae</taxon>
        <taxon>Brucella/Ochrobactrum group</taxon>
        <taxon>Brucella</taxon>
    </lineage>
</organism>
<proteinExistence type="inferred from homology"/>
<dbReference type="EMBL" id="AE014292">
    <property type="protein sequence ID" value="AAN33765.1"/>
    <property type="molecule type" value="Genomic_DNA"/>
</dbReference>
<dbReference type="EMBL" id="CP002998">
    <property type="protein sequence ID" value="AEM20042.1"/>
    <property type="molecule type" value="Genomic_DNA"/>
</dbReference>
<dbReference type="RefSeq" id="WP_006278930.1">
    <property type="nucleotide sequence ID" value="NC_004311.2"/>
</dbReference>
<dbReference type="SMR" id="Q8FW84"/>
<dbReference type="GeneID" id="45053612"/>
<dbReference type="KEGG" id="bms:BRA0576"/>
<dbReference type="KEGG" id="bsi:BS1330_II0571"/>
<dbReference type="PATRIC" id="fig|204722.22.peg.2418"/>
<dbReference type="HOGENOM" id="CLU_023171_0_0_5"/>
<dbReference type="PhylomeDB" id="Q8FW84"/>
<dbReference type="Proteomes" id="UP000007104">
    <property type="component" value="Chromosome II"/>
</dbReference>
<dbReference type="GO" id="GO:0043190">
    <property type="term" value="C:ATP-binding cassette (ABC) transporter complex"/>
    <property type="evidence" value="ECO:0007669"/>
    <property type="project" value="InterPro"/>
</dbReference>
<dbReference type="GO" id="GO:0030288">
    <property type="term" value="C:outer membrane-bounded periplasmic space"/>
    <property type="evidence" value="ECO:0007669"/>
    <property type="project" value="TreeGrafter"/>
</dbReference>
<dbReference type="GO" id="GO:1904680">
    <property type="term" value="F:peptide transmembrane transporter activity"/>
    <property type="evidence" value="ECO:0007669"/>
    <property type="project" value="TreeGrafter"/>
</dbReference>
<dbReference type="GO" id="GO:0042884">
    <property type="term" value="P:microcin transport"/>
    <property type="evidence" value="ECO:0007669"/>
    <property type="project" value="TreeGrafter"/>
</dbReference>
<dbReference type="GO" id="GO:0015833">
    <property type="term" value="P:peptide transport"/>
    <property type="evidence" value="ECO:0007669"/>
    <property type="project" value="TreeGrafter"/>
</dbReference>
<dbReference type="CDD" id="cd08497">
    <property type="entry name" value="MbnE-like"/>
    <property type="match status" value="1"/>
</dbReference>
<dbReference type="Gene3D" id="3.10.105.10">
    <property type="entry name" value="Dipeptide-binding Protein, Domain 3"/>
    <property type="match status" value="1"/>
</dbReference>
<dbReference type="Gene3D" id="3.40.190.10">
    <property type="entry name" value="Periplasmic binding protein-like II"/>
    <property type="match status" value="1"/>
</dbReference>
<dbReference type="InterPro" id="IPR030678">
    <property type="entry name" value="Peptide/Ni-bd"/>
</dbReference>
<dbReference type="InterPro" id="IPR039424">
    <property type="entry name" value="SBP_5"/>
</dbReference>
<dbReference type="InterPro" id="IPR000914">
    <property type="entry name" value="SBP_5_dom"/>
</dbReference>
<dbReference type="PANTHER" id="PTHR30290:SF64">
    <property type="entry name" value="ABC TRANSPORTER PERIPLASMIC BINDING PROTEIN"/>
    <property type="match status" value="1"/>
</dbReference>
<dbReference type="PANTHER" id="PTHR30290">
    <property type="entry name" value="PERIPLASMIC BINDING COMPONENT OF ABC TRANSPORTER"/>
    <property type="match status" value="1"/>
</dbReference>
<dbReference type="Pfam" id="PF00496">
    <property type="entry name" value="SBP_bac_5"/>
    <property type="match status" value="1"/>
</dbReference>
<dbReference type="PIRSF" id="PIRSF002741">
    <property type="entry name" value="MppA"/>
    <property type="match status" value="1"/>
</dbReference>
<dbReference type="SUPFAM" id="SSF53850">
    <property type="entry name" value="Periplasmic binding protein-like II"/>
    <property type="match status" value="1"/>
</dbReference>
<keyword id="KW-0574">Periplasm</keyword>
<keyword id="KW-0732">Signal</keyword>
<keyword id="KW-0813">Transport</keyword>
<sequence length="615" mass="69574">MLNRFIAFFRSVFLIGLVATAFGALPARAANETAPDYALSMHGDVALPADYTHFPYTNPDAPKKGSLTVGVVGTFDSLNPFVLKSMRTTARGLYNDGEFGNMVYQTLMLRSRDEPFTLYSLLAEKVAIDPERKWVEFTLNPKAKWSDGQPVTVDDVLFTYDILTEKGRPPYNSRMSRVAKIEKTGERSVRFTFNEKSDREFPMLIAGSMPVLPKHAINRDTFGNSTLEPPIGSGPYVVASVQPGQRIVYKRNPDYWGKDLPSQRGFNNFDKISIEYYRNETSLFESFKKGILDIFIEGNPIRWEKLYDFPAVEQGKVIKDTFEKGTPADMLGFVFNTRRPIFADRRVRQALGLLFDFEWANRNLFAGQYRRTQSFWEGSQLSSVGRPADARERELLAAFPGAVREDVMNGTWHPPVTDGSGHDRVPAKKAYDLLSQAGFQFKDGMAIDPTGKPFAFEIMTRSPDEEKIALAYQRNLSRLGIAVEIHTVDDAQYQQRLQTFDYDMILGALASSLSPGNEQWLRWGSASRDVQGSFNFAGVADPAVDAMIEALLAARNRADFVSAVRALDRVLISGDYYVPLYHLPYQWVARWDRIEHPQKTPLSGYQLPTWWHTSQ</sequence>
<accession>Q8FW84</accession>
<accession>G0KCV4</accession>
<protein>
    <recommendedName>
        <fullName>Putative binding protein BRA0576/BS1330_II0571</fullName>
    </recommendedName>
</protein>
<name>Y3576_BRUSU</name>